<evidence type="ECO:0000250" key="1">
    <source>
        <dbReference type="UniProtKB" id="Q8IBN8"/>
    </source>
</evidence>
<evidence type="ECO:0000250" key="2">
    <source>
        <dbReference type="UniProtKB" id="Q9H8H2"/>
    </source>
</evidence>
<evidence type="ECO:0000255" key="3">
    <source>
        <dbReference type="PROSITE-ProRule" id="PRU00541"/>
    </source>
</evidence>
<evidence type="ECO:0000255" key="4">
    <source>
        <dbReference type="PROSITE-ProRule" id="PRU00542"/>
    </source>
</evidence>
<evidence type="ECO:0000256" key="5">
    <source>
        <dbReference type="SAM" id="MobiDB-lite"/>
    </source>
</evidence>
<evidence type="ECO:0000305" key="6"/>
<organism>
    <name type="scientific">Dictyostelium discoideum</name>
    <name type="common">Social amoeba</name>
    <dbReference type="NCBI Taxonomy" id="44689"/>
    <lineage>
        <taxon>Eukaryota</taxon>
        <taxon>Amoebozoa</taxon>
        <taxon>Evosea</taxon>
        <taxon>Eumycetozoa</taxon>
        <taxon>Dictyostelia</taxon>
        <taxon>Dictyosteliales</taxon>
        <taxon>Dictyosteliaceae</taxon>
        <taxon>Dictyostelium</taxon>
    </lineage>
</organism>
<name>DDX31_DICDI</name>
<gene>
    <name type="primary">ddx31</name>
    <name type="ORF">DDB_G0271708</name>
</gene>
<dbReference type="EC" id="5.6.2.-" evidence="1"/>
<dbReference type="EC" id="3.6.4.13" evidence="1"/>
<dbReference type="EMBL" id="AAFI02000006">
    <property type="protein sequence ID" value="EAL71544.1"/>
    <property type="molecule type" value="Genomic_DNA"/>
</dbReference>
<dbReference type="RefSeq" id="XP_645498.1">
    <property type="nucleotide sequence ID" value="XM_640406.1"/>
</dbReference>
<dbReference type="SMR" id="Q869P0"/>
<dbReference type="FunCoup" id="Q869P0">
    <property type="interactions" value="381"/>
</dbReference>
<dbReference type="STRING" id="44689.Q869P0"/>
<dbReference type="PaxDb" id="44689-DDB0234202"/>
<dbReference type="EnsemblProtists" id="EAL71544">
    <property type="protein sequence ID" value="EAL71544"/>
    <property type="gene ID" value="DDB_G0271708"/>
</dbReference>
<dbReference type="GeneID" id="8618126"/>
<dbReference type="KEGG" id="ddi:DDB_G0271708"/>
<dbReference type="dictyBase" id="DDB_G0271708">
    <property type="gene designation" value="ddx31"/>
</dbReference>
<dbReference type="VEuPathDB" id="AmoebaDB:DDB_G0271708"/>
<dbReference type="eggNOG" id="KOG0348">
    <property type="taxonomic scope" value="Eukaryota"/>
</dbReference>
<dbReference type="HOGENOM" id="CLU_003041_26_2_1"/>
<dbReference type="InParanoid" id="Q869P0"/>
<dbReference type="OMA" id="AVHIKAD"/>
<dbReference type="PhylomeDB" id="Q869P0"/>
<dbReference type="PRO" id="PR:Q869P0"/>
<dbReference type="Proteomes" id="UP000002195">
    <property type="component" value="Chromosome 2"/>
</dbReference>
<dbReference type="GO" id="GO:0005730">
    <property type="term" value="C:nucleolus"/>
    <property type="evidence" value="ECO:0007669"/>
    <property type="project" value="UniProtKB-SubCell"/>
</dbReference>
<dbReference type="GO" id="GO:0005634">
    <property type="term" value="C:nucleus"/>
    <property type="evidence" value="ECO:0000318"/>
    <property type="project" value="GO_Central"/>
</dbReference>
<dbReference type="GO" id="GO:0005524">
    <property type="term" value="F:ATP binding"/>
    <property type="evidence" value="ECO:0007669"/>
    <property type="project" value="UniProtKB-KW"/>
</dbReference>
<dbReference type="GO" id="GO:0016887">
    <property type="term" value="F:ATP hydrolysis activity"/>
    <property type="evidence" value="ECO:0007669"/>
    <property type="project" value="RHEA"/>
</dbReference>
<dbReference type="GO" id="GO:0003723">
    <property type="term" value="F:RNA binding"/>
    <property type="evidence" value="ECO:0007669"/>
    <property type="project" value="UniProtKB-KW"/>
</dbReference>
<dbReference type="GO" id="GO:0003724">
    <property type="term" value="F:RNA helicase activity"/>
    <property type="evidence" value="ECO:0007669"/>
    <property type="project" value="UniProtKB-EC"/>
</dbReference>
<dbReference type="GO" id="GO:0042254">
    <property type="term" value="P:ribosome biogenesis"/>
    <property type="evidence" value="ECO:0000318"/>
    <property type="project" value="GO_Central"/>
</dbReference>
<dbReference type="CDD" id="cd17949">
    <property type="entry name" value="DEADc_DDX31"/>
    <property type="match status" value="1"/>
</dbReference>
<dbReference type="CDD" id="cd18787">
    <property type="entry name" value="SF2_C_DEAD"/>
    <property type="match status" value="1"/>
</dbReference>
<dbReference type="Gene3D" id="3.40.50.300">
    <property type="entry name" value="P-loop containing nucleotide triphosphate hydrolases"/>
    <property type="match status" value="2"/>
</dbReference>
<dbReference type="InterPro" id="IPR011545">
    <property type="entry name" value="DEAD/DEAH_box_helicase_dom"/>
</dbReference>
<dbReference type="InterPro" id="IPR014001">
    <property type="entry name" value="Helicase_ATP-bd"/>
</dbReference>
<dbReference type="InterPro" id="IPR001650">
    <property type="entry name" value="Helicase_C-like"/>
</dbReference>
<dbReference type="InterPro" id="IPR027417">
    <property type="entry name" value="P-loop_NTPase"/>
</dbReference>
<dbReference type="InterPro" id="IPR000629">
    <property type="entry name" value="RNA-helicase_DEAD-box_CS"/>
</dbReference>
<dbReference type="InterPro" id="IPR025313">
    <property type="entry name" value="SPB4-like_CTE"/>
</dbReference>
<dbReference type="PANTHER" id="PTHR24031">
    <property type="entry name" value="RNA HELICASE"/>
    <property type="match status" value="1"/>
</dbReference>
<dbReference type="Pfam" id="PF13959">
    <property type="entry name" value="CTE_SPB4"/>
    <property type="match status" value="1"/>
</dbReference>
<dbReference type="Pfam" id="PF00270">
    <property type="entry name" value="DEAD"/>
    <property type="match status" value="1"/>
</dbReference>
<dbReference type="Pfam" id="PF00271">
    <property type="entry name" value="Helicase_C"/>
    <property type="match status" value="1"/>
</dbReference>
<dbReference type="SMART" id="SM00487">
    <property type="entry name" value="DEXDc"/>
    <property type="match status" value="1"/>
</dbReference>
<dbReference type="SMART" id="SM01178">
    <property type="entry name" value="DUF4217"/>
    <property type="match status" value="1"/>
</dbReference>
<dbReference type="SMART" id="SM00490">
    <property type="entry name" value="HELICc"/>
    <property type="match status" value="1"/>
</dbReference>
<dbReference type="SUPFAM" id="SSF52540">
    <property type="entry name" value="P-loop containing nucleoside triphosphate hydrolases"/>
    <property type="match status" value="2"/>
</dbReference>
<dbReference type="PROSITE" id="PS00039">
    <property type="entry name" value="DEAD_ATP_HELICASE"/>
    <property type="match status" value="1"/>
</dbReference>
<dbReference type="PROSITE" id="PS51192">
    <property type="entry name" value="HELICASE_ATP_BIND_1"/>
    <property type="match status" value="1"/>
</dbReference>
<dbReference type="PROSITE" id="PS51194">
    <property type="entry name" value="HELICASE_CTER"/>
    <property type="match status" value="1"/>
</dbReference>
<dbReference type="PROSITE" id="PS51195">
    <property type="entry name" value="Q_MOTIF"/>
    <property type="match status" value="1"/>
</dbReference>
<proteinExistence type="inferred from homology"/>
<protein>
    <recommendedName>
        <fullName>ATP-dependent DNA helicase DDX31</fullName>
        <ecNumber evidence="1">5.6.2.-</ecNumber>
    </recommendedName>
    <alternativeName>
        <fullName>DEAD box protein 31</fullName>
    </alternativeName>
    <alternativeName>
        <fullName>Probable ATP-dependent RNA helicase DDX31</fullName>
        <ecNumber evidence="1">3.6.4.13</ecNumber>
    </alternativeName>
</protein>
<comment type="function">
    <text evidence="1">May have DNA helicase activity and RNA helicase activity. Probably have ssDNA and RNA dependent ATPase activity.</text>
</comment>
<comment type="catalytic activity">
    <reaction evidence="1">
        <text>ATP + H2O = ADP + phosphate + H(+)</text>
        <dbReference type="Rhea" id="RHEA:13065"/>
        <dbReference type="ChEBI" id="CHEBI:15377"/>
        <dbReference type="ChEBI" id="CHEBI:15378"/>
        <dbReference type="ChEBI" id="CHEBI:30616"/>
        <dbReference type="ChEBI" id="CHEBI:43474"/>
        <dbReference type="ChEBI" id="CHEBI:456216"/>
        <dbReference type="EC" id="3.6.4.13"/>
    </reaction>
    <physiologicalReaction direction="left-to-right" evidence="1">
        <dbReference type="Rhea" id="RHEA:13066"/>
    </physiologicalReaction>
</comment>
<comment type="subcellular location">
    <subcellularLocation>
        <location evidence="2">Nucleus</location>
        <location evidence="2">Nucleolus</location>
    </subcellularLocation>
    <text evidence="2">Colocalized with NPM1 in the nucleoli.</text>
</comment>
<comment type="similarity">
    <text evidence="6">Belongs to the DEAD box helicase family. DDX31/DBP7 subfamily.</text>
</comment>
<sequence length="908" mass="104422">MADEDDGLQLNICYLQRVPKKEINSKAEEEAYFKENISNNNNFTNNRAYREKTNKNENNLNNNKNNNNNNNNNKTYNNNNSNNSYNNNNYNNNSFNNNNNNNYNNNNSNNNNNSNNNNLNKKPTFLEKKIQQEQKQKELKELKGPQHHRYRNQENEESNAIESNSNNFKDKYKFAENKTKKDEFNRPILETIESNIKVEKSETFSSMNWGSLQLSETLVRNLVGHMKHEKPTHIQEASITPILKGNDALVKAQTGSGKTLSYLIPVVQKLTEQRVTRSDGCYCVIITPTRELSSQIYEELQKLLKPFYWIVPGIIMGGENRSAEKARIRKGINILVATPGRLLDHLQNTQSFPTDNIKWCILDEADKLLDLGFEKDVTTIINLLDSKKRTMKFKRQNILVSATLSEGISRLASLSLTSPVYIGLDSKVLEKGENPFQAAEKEMLQAPKQLDQFYVEVESKERLTSLIAFIRWKTSNITIDKGDVASGNSSANSKMIVFFSSCDSVDFHHYMFSNMKMDKERGVKRTKKEQIKQDKLIQQHKQKNSKIFQTGNESDDEESDNDDSDDSDSNNSDSETDEEKEIEKQIKEATSNPNYRVKTSVFSVPIFKLHGELDQQTRTKTFFDFKNSPNGILLTTDVSARGLDLPSVNWIVQYDPCSDTKDYIHRIGRTARLGNQGCSLLFLLPSEKKYIDHLAKFNVSVKEMKVTTILQSLFYTSDGQLKKTSKSSQLESQVHDLQLLFERFLIYDSKAKEMARCAYQSFLRSYATHKADVKSIFHISYLHLGHVSKSFALRETPTELNKMSAGIKGAKAAKKGDEDTLQKQTADFKMKNYKSVNEFSDGLNDQPLQRANFHYESASGVIHNIYQRHFNRNERDEADKNSNPKEIKEKKRRLYDKKIESNKKFKSK</sequence>
<feature type="chain" id="PRO_0000311828" description="ATP-dependent DNA helicase DDX31">
    <location>
        <begin position="1"/>
        <end position="908"/>
    </location>
</feature>
<feature type="domain" description="Helicase ATP-binding" evidence="3">
    <location>
        <begin position="239"/>
        <end position="422"/>
    </location>
</feature>
<feature type="domain" description="Helicase C-terminal" evidence="4">
    <location>
        <begin position="518"/>
        <end position="738"/>
    </location>
</feature>
<feature type="region of interest" description="Disordered" evidence="5">
    <location>
        <begin position="55"/>
        <end position="165"/>
    </location>
</feature>
<feature type="region of interest" description="Disordered" evidence="5">
    <location>
        <begin position="519"/>
        <end position="590"/>
    </location>
</feature>
<feature type="region of interest" description="Disordered" evidence="5">
    <location>
        <begin position="872"/>
        <end position="908"/>
    </location>
</feature>
<feature type="short sequence motif" description="Q motif">
    <location>
        <begin position="207"/>
        <end position="236"/>
    </location>
</feature>
<feature type="short sequence motif" description="DEAD box">
    <location>
        <begin position="363"/>
        <end position="366"/>
    </location>
</feature>
<feature type="compositionally biased region" description="Low complexity" evidence="5">
    <location>
        <begin position="56"/>
        <end position="122"/>
    </location>
</feature>
<feature type="compositionally biased region" description="Basic and acidic residues" evidence="5">
    <location>
        <begin position="124"/>
        <end position="144"/>
    </location>
</feature>
<feature type="compositionally biased region" description="Basic and acidic residues" evidence="5">
    <location>
        <begin position="519"/>
        <end position="537"/>
    </location>
</feature>
<feature type="compositionally biased region" description="Acidic residues" evidence="5">
    <location>
        <begin position="553"/>
        <end position="580"/>
    </location>
</feature>
<feature type="compositionally biased region" description="Basic and acidic residues" evidence="5">
    <location>
        <begin position="872"/>
        <end position="889"/>
    </location>
</feature>
<feature type="compositionally biased region" description="Basic and acidic residues" evidence="5">
    <location>
        <begin position="896"/>
        <end position="908"/>
    </location>
</feature>
<feature type="binding site" evidence="3">
    <location>
        <begin position="252"/>
        <end position="259"/>
    </location>
    <ligand>
        <name>ATP</name>
        <dbReference type="ChEBI" id="CHEBI:30616"/>
    </ligand>
</feature>
<accession>Q869P0</accession>
<accession>Q55AM4</accession>
<keyword id="KW-0067">ATP-binding</keyword>
<keyword id="KW-0347">Helicase</keyword>
<keyword id="KW-0378">Hydrolase</keyword>
<keyword id="KW-0413">Isomerase</keyword>
<keyword id="KW-0547">Nucleotide-binding</keyword>
<keyword id="KW-0539">Nucleus</keyword>
<keyword id="KW-1185">Reference proteome</keyword>
<keyword id="KW-0694">RNA-binding</keyword>
<reference key="1">
    <citation type="journal article" date="2002" name="Nature">
        <title>Sequence and analysis of chromosome 2 of Dictyostelium discoideum.</title>
        <authorList>
            <person name="Gloeckner G."/>
            <person name="Eichinger L."/>
            <person name="Szafranski K."/>
            <person name="Pachebat J.A."/>
            <person name="Bankier A.T."/>
            <person name="Dear P.H."/>
            <person name="Lehmann R."/>
            <person name="Baumgart C."/>
            <person name="Parra G."/>
            <person name="Abril J.F."/>
            <person name="Guigo R."/>
            <person name="Kumpf K."/>
            <person name="Tunggal B."/>
            <person name="Cox E.C."/>
            <person name="Quail M.A."/>
            <person name="Platzer M."/>
            <person name="Rosenthal A."/>
            <person name="Noegel A.A."/>
        </authorList>
    </citation>
    <scope>NUCLEOTIDE SEQUENCE [LARGE SCALE GENOMIC DNA]</scope>
    <source>
        <strain>AX4</strain>
    </source>
</reference>
<reference key="2">
    <citation type="journal article" date="2005" name="Nature">
        <title>The genome of the social amoeba Dictyostelium discoideum.</title>
        <authorList>
            <person name="Eichinger L."/>
            <person name="Pachebat J.A."/>
            <person name="Gloeckner G."/>
            <person name="Rajandream M.A."/>
            <person name="Sucgang R."/>
            <person name="Berriman M."/>
            <person name="Song J."/>
            <person name="Olsen R."/>
            <person name="Szafranski K."/>
            <person name="Xu Q."/>
            <person name="Tunggal B."/>
            <person name="Kummerfeld S."/>
            <person name="Madera M."/>
            <person name="Konfortov B.A."/>
            <person name="Rivero F."/>
            <person name="Bankier A.T."/>
            <person name="Lehmann R."/>
            <person name="Hamlin N."/>
            <person name="Davies R."/>
            <person name="Gaudet P."/>
            <person name="Fey P."/>
            <person name="Pilcher K."/>
            <person name="Chen G."/>
            <person name="Saunders D."/>
            <person name="Sodergren E.J."/>
            <person name="Davis P."/>
            <person name="Kerhornou A."/>
            <person name="Nie X."/>
            <person name="Hall N."/>
            <person name="Anjard C."/>
            <person name="Hemphill L."/>
            <person name="Bason N."/>
            <person name="Farbrother P."/>
            <person name="Desany B."/>
            <person name="Just E."/>
            <person name="Morio T."/>
            <person name="Rost R."/>
            <person name="Churcher C.M."/>
            <person name="Cooper J."/>
            <person name="Haydock S."/>
            <person name="van Driessche N."/>
            <person name="Cronin A."/>
            <person name="Goodhead I."/>
            <person name="Muzny D.M."/>
            <person name="Mourier T."/>
            <person name="Pain A."/>
            <person name="Lu M."/>
            <person name="Harper D."/>
            <person name="Lindsay R."/>
            <person name="Hauser H."/>
            <person name="James K.D."/>
            <person name="Quiles M."/>
            <person name="Madan Babu M."/>
            <person name="Saito T."/>
            <person name="Buchrieser C."/>
            <person name="Wardroper A."/>
            <person name="Felder M."/>
            <person name="Thangavelu M."/>
            <person name="Johnson D."/>
            <person name="Knights A."/>
            <person name="Loulseged H."/>
            <person name="Mungall K.L."/>
            <person name="Oliver K."/>
            <person name="Price C."/>
            <person name="Quail M.A."/>
            <person name="Urushihara H."/>
            <person name="Hernandez J."/>
            <person name="Rabbinowitsch E."/>
            <person name="Steffen D."/>
            <person name="Sanders M."/>
            <person name="Ma J."/>
            <person name="Kohara Y."/>
            <person name="Sharp S."/>
            <person name="Simmonds M.N."/>
            <person name="Spiegler S."/>
            <person name="Tivey A."/>
            <person name="Sugano S."/>
            <person name="White B."/>
            <person name="Walker D."/>
            <person name="Woodward J.R."/>
            <person name="Winckler T."/>
            <person name="Tanaka Y."/>
            <person name="Shaulsky G."/>
            <person name="Schleicher M."/>
            <person name="Weinstock G.M."/>
            <person name="Rosenthal A."/>
            <person name="Cox E.C."/>
            <person name="Chisholm R.L."/>
            <person name="Gibbs R.A."/>
            <person name="Loomis W.F."/>
            <person name="Platzer M."/>
            <person name="Kay R.R."/>
            <person name="Williams J.G."/>
            <person name="Dear P.H."/>
            <person name="Noegel A.A."/>
            <person name="Barrell B.G."/>
            <person name="Kuspa A."/>
        </authorList>
    </citation>
    <scope>NUCLEOTIDE SEQUENCE [LARGE SCALE GENOMIC DNA]</scope>
    <source>
        <strain>AX4</strain>
    </source>
</reference>